<name>DPO4_CLOPE</name>
<reference key="1">
    <citation type="journal article" date="2002" name="Proc. Natl. Acad. Sci. U.S.A.">
        <title>Complete genome sequence of Clostridium perfringens, an anaerobic flesh-eater.</title>
        <authorList>
            <person name="Shimizu T."/>
            <person name="Ohtani K."/>
            <person name="Hirakawa H."/>
            <person name="Ohshima K."/>
            <person name="Yamashita A."/>
            <person name="Shiba T."/>
            <person name="Ogasawara N."/>
            <person name="Hattori M."/>
            <person name="Kuhara S."/>
            <person name="Hayashi H."/>
        </authorList>
    </citation>
    <scope>NUCLEOTIDE SEQUENCE [LARGE SCALE GENOMIC DNA]</scope>
    <source>
        <strain>13 / Type A</strain>
    </source>
</reference>
<sequence length="359" mass="41025">MKENRKIIHIDMDAFYASIEQRDNPKYKGKPLIVGGDPNRRGVVATCSYEARKYGIHSAMPSLTAYKLCPKAIFIRPRMEVYKKVSRQVMNILNEYSNIVEPLSLDEAFVDVSKSKRCKGSATLIALEIKERIFKEVGLTASAGVSFNKFLAKMASDFRKPDGITVITEENSKDFIRKLPIGKFFGVGRVTKNKLNNIGVFKGEDLLGFSEKELIGILGDRGKILYEFARGIDNRQVNPYRIRKSIGKEITLREDIEDIEEMIEILEKISERVSESLCLLNKKGKTVTLKVKFNDFKHITRSITLEHFLKEQKEIMECVKDLISIVDFKNKKVRLLGITISSLEENIITEEREQLSFDV</sequence>
<comment type="function">
    <text evidence="1">Poorly processive, error-prone DNA polymerase involved in untargeted mutagenesis. Copies undamaged DNA at stalled replication forks, which arise in vivo from mismatched or misaligned primer ends. These misaligned primers can be extended by PolIV. Exhibits no 3'-5' exonuclease (proofreading) activity. May be involved in translesional synthesis, in conjunction with the beta clamp from PolIII.</text>
</comment>
<comment type="catalytic activity">
    <reaction evidence="1">
        <text>DNA(n) + a 2'-deoxyribonucleoside 5'-triphosphate = DNA(n+1) + diphosphate</text>
        <dbReference type="Rhea" id="RHEA:22508"/>
        <dbReference type="Rhea" id="RHEA-COMP:17339"/>
        <dbReference type="Rhea" id="RHEA-COMP:17340"/>
        <dbReference type="ChEBI" id="CHEBI:33019"/>
        <dbReference type="ChEBI" id="CHEBI:61560"/>
        <dbReference type="ChEBI" id="CHEBI:173112"/>
        <dbReference type="EC" id="2.7.7.7"/>
    </reaction>
</comment>
<comment type="cofactor">
    <cofactor evidence="1">
        <name>Mg(2+)</name>
        <dbReference type="ChEBI" id="CHEBI:18420"/>
    </cofactor>
    <text evidence="1">Binds 2 magnesium ions per subunit.</text>
</comment>
<comment type="subunit">
    <text evidence="1">Monomer.</text>
</comment>
<comment type="subcellular location">
    <subcellularLocation>
        <location evidence="1">Cytoplasm</location>
    </subcellularLocation>
</comment>
<comment type="similarity">
    <text evidence="1">Belongs to the DNA polymerase type-Y family.</text>
</comment>
<organism>
    <name type="scientific">Clostridium perfringens (strain 13 / Type A)</name>
    <dbReference type="NCBI Taxonomy" id="195102"/>
    <lineage>
        <taxon>Bacteria</taxon>
        <taxon>Bacillati</taxon>
        <taxon>Bacillota</taxon>
        <taxon>Clostridia</taxon>
        <taxon>Eubacteriales</taxon>
        <taxon>Clostridiaceae</taxon>
        <taxon>Clostridium</taxon>
    </lineage>
</organism>
<accession>Q8XK37</accession>
<protein>
    <recommendedName>
        <fullName evidence="1">DNA polymerase IV</fullName>
        <shortName evidence="1">Pol IV</shortName>
        <ecNumber evidence="1">2.7.7.7</ecNumber>
    </recommendedName>
</protein>
<gene>
    <name evidence="1" type="primary">dinB</name>
    <name type="ordered locus">CPE1566</name>
</gene>
<keyword id="KW-0963">Cytoplasm</keyword>
<keyword id="KW-0227">DNA damage</keyword>
<keyword id="KW-0234">DNA repair</keyword>
<keyword id="KW-0235">DNA replication</keyword>
<keyword id="KW-0238">DNA-binding</keyword>
<keyword id="KW-0239">DNA-directed DNA polymerase</keyword>
<keyword id="KW-0460">Magnesium</keyword>
<keyword id="KW-0479">Metal-binding</keyword>
<keyword id="KW-0515">Mutator protein</keyword>
<keyword id="KW-0548">Nucleotidyltransferase</keyword>
<keyword id="KW-1185">Reference proteome</keyword>
<keyword id="KW-0808">Transferase</keyword>
<dbReference type="EC" id="2.7.7.7" evidence="1"/>
<dbReference type="EMBL" id="BA000016">
    <property type="protein sequence ID" value="BAB81272.1"/>
    <property type="molecule type" value="Genomic_DNA"/>
</dbReference>
<dbReference type="RefSeq" id="WP_011010511.1">
    <property type="nucleotide sequence ID" value="NC_003366.1"/>
</dbReference>
<dbReference type="SMR" id="Q8XK37"/>
<dbReference type="STRING" id="195102.gene:10490830"/>
<dbReference type="KEGG" id="cpe:CPE1566"/>
<dbReference type="HOGENOM" id="CLU_012348_1_2_9"/>
<dbReference type="Proteomes" id="UP000000818">
    <property type="component" value="Chromosome"/>
</dbReference>
<dbReference type="GO" id="GO:0005829">
    <property type="term" value="C:cytosol"/>
    <property type="evidence" value="ECO:0007669"/>
    <property type="project" value="TreeGrafter"/>
</dbReference>
<dbReference type="GO" id="GO:0003684">
    <property type="term" value="F:damaged DNA binding"/>
    <property type="evidence" value="ECO:0007669"/>
    <property type="project" value="InterPro"/>
</dbReference>
<dbReference type="GO" id="GO:0003887">
    <property type="term" value="F:DNA-directed DNA polymerase activity"/>
    <property type="evidence" value="ECO:0007669"/>
    <property type="project" value="UniProtKB-UniRule"/>
</dbReference>
<dbReference type="GO" id="GO:0000287">
    <property type="term" value="F:magnesium ion binding"/>
    <property type="evidence" value="ECO:0007669"/>
    <property type="project" value="UniProtKB-UniRule"/>
</dbReference>
<dbReference type="GO" id="GO:0006261">
    <property type="term" value="P:DNA-templated DNA replication"/>
    <property type="evidence" value="ECO:0007669"/>
    <property type="project" value="UniProtKB-UniRule"/>
</dbReference>
<dbReference type="GO" id="GO:0042276">
    <property type="term" value="P:error-prone translesion synthesis"/>
    <property type="evidence" value="ECO:0007669"/>
    <property type="project" value="TreeGrafter"/>
</dbReference>
<dbReference type="GO" id="GO:0009432">
    <property type="term" value="P:SOS response"/>
    <property type="evidence" value="ECO:0007669"/>
    <property type="project" value="TreeGrafter"/>
</dbReference>
<dbReference type="CDD" id="cd03586">
    <property type="entry name" value="PolY_Pol_IV_kappa"/>
    <property type="match status" value="1"/>
</dbReference>
<dbReference type="FunFam" id="3.30.1490.100:FF:000004">
    <property type="entry name" value="DNA polymerase IV"/>
    <property type="match status" value="1"/>
</dbReference>
<dbReference type="FunFam" id="3.40.1170.60:FF:000001">
    <property type="entry name" value="DNA polymerase IV"/>
    <property type="match status" value="1"/>
</dbReference>
<dbReference type="Gene3D" id="3.30.70.270">
    <property type="match status" value="1"/>
</dbReference>
<dbReference type="Gene3D" id="3.40.1170.60">
    <property type="match status" value="1"/>
</dbReference>
<dbReference type="Gene3D" id="1.10.150.20">
    <property type="entry name" value="5' to 3' exonuclease, C-terminal subdomain"/>
    <property type="match status" value="1"/>
</dbReference>
<dbReference type="Gene3D" id="3.30.1490.100">
    <property type="entry name" value="DNA polymerase, Y-family, little finger domain"/>
    <property type="match status" value="1"/>
</dbReference>
<dbReference type="HAMAP" id="MF_01113">
    <property type="entry name" value="DNApol_IV"/>
    <property type="match status" value="1"/>
</dbReference>
<dbReference type="InterPro" id="IPR043502">
    <property type="entry name" value="DNA/RNA_pol_sf"/>
</dbReference>
<dbReference type="InterPro" id="IPR036775">
    <property type="entry name" value="DNA_pol_Y-fam_lit_finger_sf"/>
</dbReference>
<dbReference type="InterPro" id="IPR017961">
    <property type="entry name" value="DNA_pol_Y-fam_little_finger"/>
</dbReference>
<dbReference type="InterPro" id="IPR050116">
    <property type="entry name" value="DNA_polymerase-Y"/>
</dbReference>
<dbReference type="InterPro" id="IPR022880">
    <property type="entry name" value="DNApol_IV"/>
</dbReference>
<dbReference type="InterPro" id="IPR043128">
    <property type="entry name" value="Rev_trsase/Diguanyl_cyclase"/>
</dbReference>
<dbReference type="InterPro" id="IPR001126">
    <property type="entry name" value="UmuC"/>
</dbReference>
<dbReference type="NCBIfam" id="NF002677">
    <property type="entry name" value="PRK02406.1"/>
    <property type="match status" value="1"/>
</dbReference>
<dbReference type="NCBIfam" id="NF010731">
    <property type="entry name" value="PRK14133.1"/>
    <property type="match status" value="1"/>
</dbReference>
<dbReference type="PANTHER" id="PTHR11076:SF33">
    <property type="entry name" value="DNA POLYMERASE KAPPA"/>
    <property type="match status" value="1"/>
</dbReference>
<dbReference type="PANTHER" id="PTHR11076">
    <property type="entry name" value="DNA REPAIR POLYMERASE UMUC / TRANSFERASE FAMILY MEMBER"/>
    <property type="match status" value="1"/>
</dbReference>
<dbReference type="Pfam" id="PF00817">
    <property type="entry name" value="IMS"/>
    <property type="match status" value="1"/>
</dbReference>
<dbReference type="Pfam" id="PF11799">
    <property type="entry name" value="IMS_C"/>
    <property type="match status" value="1"/>
</dbReference>
<dbReference type="SUPFAM" id="SSF56672">
    <property type="entry name" value="DNA/RNA polymerases"/>
    <property type="match status" value="1"/>
</dbReference>
<dbReference type="SUPFAM" id="SSF100879">
    <property type="entry name" value="Lesion bypass DNA polymerase (Y-family), little finger domain"/>
    <property type="match status" value="1"/>
</dbReference>
<dbReference type="PROSITE" id="PS50173">
    <property type="entry name" value="UMUC"/>
    <property type="match status" value="1"/>
</dbReference>
<feature type="chain" id="PRO_0000173910" description="DNA polymerase IV">
    <location>
        <begin position="1"/>
        <end position="359"/>
    </location>
</feature>
<feature type="domain" description="UmuC" evidence="1">
    <location>
        <begin position="7"/>
        <end position="188"/>
    </location>
</feature>
<feature type="active site" evidence="1">
    <location>
        <position position="107"/>
    </location>
</feature>
<feature type="binding site" evidence="1">
    <location>
        <position position="11"/>
    </location>
    <ligand>
        <name>Mg(2+)</name>
        <dbReference type="ChEBI" id="CHEBI:18420"/>
    </ligand>
</feature>
<feature type="binding site" evidence="1">
    <location>
        <position position="106"/>
    </location>
    <ligand>
        <name>Mg(2+)</name>
        <dbReference type="ChEBI" id="CHEBI:18420"/>
    </ligand>
</feature>
<feature type="site" description="Substrate discrimination" evidence="1">
    <location>
        <position position="16"/>
    </location>
</feature>
<proteinExistence type="inferred from homology"/>
<evidence type="ECO:0000255" key="1">
    <source>
        <dbReference type="HAMAP-Rule" id="MF_01113"/>
    </source>
</evidence>